<evidence type="ECO:0000255" key="1">
    <source>
        <dbReference type="HAMAP-Rule" id="MF_01420"/>
    </source>
</evidence>
<accession>A0JWP5</accession>
<protein>
    <recommendedName>
        <fullName evidence="1">Probable cell division protein WhiA</fullName>
    </recommendedName>
</protein>
<comment type="function">
    <text evidence="1">Involved in cell division and chromosome segregation.</text>
</comment>
<comment type="similarity">
    <text evidence="1">Belongs to the WhiA family.</text>
</comment>
<keyword id="KW-0131">Cell cycle</keyword>
<keyword id="KW-0132">Cell division</keyword>
<keyword id="KW-0238">DNA-binding</keyword>
<keyword id="KW-1185">Reference proteome</keyword>
<dbReference type="EMBL" id="CP000454">
    <property type="protein sequence ID" value="ABK03465.1"/>
    <property type="molecule type" value="Genomic_DNA"/>
</dbReference>
<dbReference type="RefSeq" id="WP_011691931.1">
    <property type="nucleotide sequence ID" value="NC_008541.1"/>
</dbReference>
<dbReference type="SMR" id="A0JWP5"/>
<dbReference type="STRING" id="290399.Arth_2085"/>
<dbReference type="KEGG" id="art:Arth_2085"/>
<dbReference type="eggNOG" id="COG1481">
    <property type="taxonomic scope" value="Bacteria"/>
</dbReference>
<dbReference type="HOGENOM" id="CLU_053282_0_0_11"/>
<dbReference type="OrthoDB" id="5197218at2"/>
<dbReference type="Proteomes" id="UP000000754">
    <property type="component" value="Chromosome"/>
</dbReference>
<dbReference type="GO" id="GO:0003677">
    <property type="term" value="F:DNA binding"/>
    <property type="evidence" value="ECO:0007669"/>
    <property type="project" value="UniProtKB-UniRule"/>
</dbReference>
<dbReference type="GO" id="GO:0051301">
    <property type="term" value="P:cell division"/>
    <property type="evidence" value="ECO:0007669"/>
    <property type="project" value="UniProtKB-UniRule"/>
</dbReference>
<dbReference type="GO" id="GO:0043937">
    <property type="term" value="P:regulation of sporulation"/>
    <property type="evidence" value="ECO:0007669"/>
    <property type="project" value="InterPro"/>
</dbReference>
<dbReference type="FunFam" id="3.10.28.10:FF:000001">
    <property type="entry name" value="Probable cell division protein WhiA"/>
    <property type="match status" value="1"/>
</dbReference>
<dbReference type="Gene3D" id="3.10.28.10">
    <property type="entry name" value="Homing endonucleases"/>
    <property type="match status" value="1"/>
</dbReference>
<dbReference type="HAMAP" id="MF_01420">
    <property type="entry name" value="HTH_type_WhiA"/>
    <property type="match status" value="1"/>
</dbReference>
<dbReference type="InterPro" id="IPR027434">
    <property type="entry name" value="Homing_endonucl"/>
</dbReference>
<dbReference type="InterPro" id="IPR018478">
    <property type="entry name" value="Sporu_reg_WhiA_N_dom"/>
</dbReference>
<dbReference type="InterPro" id="IPR003802">
    <property type="entry name" value="Sporulation_regulator_WhiA"/>
</dbReference>
<dbReference type="InterPro" id="IPR023054">
    <property type="entry name" value="Sporulation_regulator_WhiA_C"/>
</dbReference>
<dbReference type="InterPro" id="IPR039518">
    <property type="entry name" value="WhiA_LAGLIDADG_dom"/>
</dbReference>
<dbReference type="NCBIfam" id="TIGR00647">
    <property type="entry name" value="DNA_bind_WhiA"/>
    <property type="match status" value="1"/>
</dbReference>
<dbReference type="PANTHER" id="PTHR37307">
    <property type="entry name" value="CELL DIVISION PROTEIN WHIA-RELATED"/>
    <property type="match status" value="1"/>
</dbReference>
<dbReference type="PANTHER" id="PTHR37307:SF1">
    <property type="entry name" value="CELL DIVISION PROTEIN WHIA-RELATED"/>
    <property type="match status" value="1"/>
</dbReference>
<dbReference type="Pfam" id="PF02650">
    <property type="entry name" value="HTH_WhiA"/>
    <property type="match status" value="1"/>
</dbReference>
<dbReference type="Pfam" id="PF14527">
    <property type="entry name" value="LAGLIDADG_WhiA"/>
    <property type="match status" value="1"/>
</dbReference>
<dbReference type="Pfam" id="PF10298">
    <property type="entry name" value="WhiA_N"/>
    <property type="match status" value="1"/>
</dbReference>
<name>WHIA_ARTS2</name>
<proteinExistence type="inferred from homology"/>
<feature type="chain" id="PRO_0000376426" description="Probable cell division protein WhiA">
    <location>
        <begin position="1"/>
        <end position="326"/>
    </location>
</feature>
<feature type="DNA-binding region" description="H-T-H motif" evidence="1">
    <location>
        <begin position="275"/>
        <end position="308"/>
    </location>
</feature>
<sequence length="326" mass="34961">MALTSSVKEELSRLDIKKSSVRKAEVSAMLRFAGGLHIISGRIVIEAEVDLASTARRLRAAIAEVYGHQSEIIVVSGGGLRRGNRYVVRVVRDGEALARQTGLLDARGRPVRGLPSAVVNGSAADAEAVWRGAFLAHGSLTEPGRSSAMEVTCPGPESALALVGAARRLGIQAKAREVRGVDRVVIRDGDTIAALLTRMGAHDALMVWEERRMRKEVRATANRLANFDDANLRRSAQAAVAAGARVDRALEILGDDVPDHLKYAGELRVAHKQASLDELGRLADPPMTKDAIAGRIRRLLAMADKRALDLGIPGTEANVTPEMLDE</sequence>
<gene>
    <name evidence="1" type="primary">whiA</name>
    <name type="ordered locus">Arth_2085</name>
</gene>
<reference key="1">
    <citation type="journal article" date="2013" name="Stand. Genomic Sci.">
        <title>Complete genome sequence of Arthrobacter sp. strain FB24.</title>
        <authorList>
            <person name="Nakatsu C.H."/>
            <person name="Barabote R."/>
            <person name="Thompson S."/>
            <person name="Bruce D."/>
            <person name="Detter C."/>
            <person name="Brettin T."/>
            <person name="Han C."/>
            <person name="Beasley F."/>
            <person name="Chen W."/>
            <person name="Konopka A."/>
            <person name="Xie G."/>
        </authorList>
    </citation>
    <scope>NUCLEOTIDE SEQUENCE [LARGE SCALE GENOMIC DNA]</scope>
    <source>
        <strain>FB24</strain>
    </source>
</reference>
<organism>
    <name type="scientific">Arthrobacter sp. (strain FB24)</name>
    <dbReference type="NCBI Taxonomy" id="290399"/>
    <lineage>
        <taxon>Bacteria</taxon>
        <taxon>Bacillati</taxon>
        <taxon>Actinomycetota</taxon>
        <taxon>Actinomycetes</taxon>
        <taxon>Micrococcales</taxon>
        <taxon>Micrococcaceae</taxon>
        <taxon>Arthrobacter</taxon>
    </lineage>
</organism>